<protein>
    <recommendedName>
        <fullName evidence="1">Large ribosomal subunit protein bL9</fullName>
    </recommendedName>
    <alternativeName>
        <fullName evidence="3">50S ribosomal protein L9</fullName>
    </alternativeName>
</protein>
<proteinExistence type="inferred from homology"/>
<name>RL9_RHIWR</name>
<comment type="function">
    <text evidence="1">Binds to the 23S rRNA.</text>
</comment>
<comment type="similarity">
    <text evidence="1">Belongs to the bacterial ribosomal protein bL9 family.</text>
</comment>
<gene>
    <name evidence="1" type="primary">rplI</name>
    <name type="ordered locus">Swit_0083</name>
</gene>
<evidence type="ECO:0000255" key="1">
    <source>
        <dbReference type="HAMAP-Rule" id="MF_00503"/>
    </source>
</evidence>
<evidence type="ECO:0000256" key="2">
    <source>
        <dbReference type="SAM" id="MobiDB-lite"/>
    </source>
</evidence>
<evidence type="ECO:0000305" key="3"/>
<reference key="1">
    <citation type="journal article" date="2010" name="J. Bacteriol.">
        <title>Genome sequence of the dioxin-mineralizing bacterium Sphingomonas wittichii RW1.</title>
        <authorList>
            <person name="Miller T.R."/>
            <person name="Delcher A.L."/>
            <person name="Salzberg S.L."/>
            <person name="Saunders E."/>
            <person name="Detter J.C."/>
            <person name="Halden R.U."/>
        </authorList>
    </citation>
    <scope>NUCLEOTIDE SEQUENCE [LARGE SCALE GENOMIC DNA]</scope>
    <source>
        <strain>DSM 6014 / CCUG 31198 / JCM 15750 / NBRC 105917 / EY 4224 / RW1</strain>
    </source>
</reference>
<keyword id="KW-1185">Reference proteome</keyword>
<keyword id="KW-0687">Ribonucleoprotein</keyword>
<keyword id="KW-0689">Ribosomal protein</keyword>
<keyword id="KW-0694">RNA-binding</keyword>
<keyword id="KW-0699">rRNA-binding</keyword>
<accession>A5V2E0</accession>
<dbReference type="EMBL" id="CP000699">
    <property type="protein sequence ID" value="ABQ66456.1"/>
    <property type="molecule type" value="Genomic_DNA"/>
</dbReference>
<dbReference type="SMR" id="A5V2E0"/>
<dbReference type="STRING" id="392499.Swit_0083"/>
<dbReference type="PaxDb" id="392499-Swit_0083"/>
<dbReference type="KEGG" id="swi:Swit_0083"/>
<dbReference type="eggNOG" id="COG0359">
    <property type="taxonomic scope" value="Bacteria"/>
</dbReference>
<dbReference type="HOGENOM" id="CLU_078938_1_0_5"/>
<dbReference type="OrthoDB" id="9788336at2"/>
<dbReference type="Proteomes" id="UP000001989">
    <property type="component" value="Chromosome"/>
</dbReference>
<dbReference type="GO" id="GO:1990904">
    <property type="term" value="C:ribonucleoprotein complex"/>
    <property type="evidence" value="ECO:0007669"/>
    <property type="project" value="UniProtKB-KW"/>
</dbReference>
<dbReference type="GO" id="GO:0005840">
    <property type="term" value="C:ribosome"/>
    <property type="evidence" value="ECO:0007669"/>
    <property type="project" value="UniProtKB-KW"/>
</dbReference>
<dbReference type="GO" id="GO:0019843">
    <property type="term" value="F:rRNA binding"/>
    <property type="evidence" value="ECO:0007669"/>
    <property type="project" value="UniProtKB-UniRule"/>
</dbReference>
<dbReference type="GO" id="GO:0003735">
    <property type="term" value="F:structural constituent of ribosome"/>
    <property type="evidence" value="ECO:0007669"/>
    <property type="project" value="InterPro"/>
</dbReference>
<dbReference type="GO" id="GO:0006412">
    <property type="term" value="P:translation"/>
    <property type="evidence" value="ECO:0007669"/>
    <property type="project" value="UniProtKB-UniRule"/>
</dbReference>
<dbReference type="Gene3D" id="3.10.430.100">
    <property type="entry name" value="Ribosomal protein L9, C-terminal domain"/>
    <property type="match status" value="1"/>
</dbReference>
<dbReference type="Gene3D" id="3.40.5.10">
    <property type="entry name" value="Ribosomal protein L9, N-terminal domain"/>
    <property type="match status" value="1"/>
</dbReference>
<dbReference type="HAMAP" id="MF_00503">
    <property type="entry name" value="Ribosomal_bL9"/>
    <property type="match status" value="1"/>
</dbReference>
<dbReference type="InterPro" id="IPR000244">
    <property type="entry name" value="Ribosomal_bL9"/>
</dbReference>
<dbReference type="InterPro" id="IPR009027">
    <property type="entry name" value="Ribosomal_bL9/RNase_H1_N"/>
</dbReference>
<dbReference type="InterPro" id="IPR020594">
    <property type="entry name" value="Ribosomal_bL9_bac/chp"/>
</dbReference>
<dbReference type="InterPro" id="IPR020069">
    <property type="entry name" value="Ribosomal_bL9_C"/>
</dbReference>
<dbReference type="InterPro" id="IPR036791">
    <property type="entry name" value="Ribosomal_bL9_C_sf"/>
</dbReference>
<dbReference type="InterPro" id="IPR020070">
    <property type="entry name" value="Ribosomal_bL9_N"/>
</dbReference>
<dbReference type="InterPro" id="IPR036935">
    <property type="entry name" value="Ribosomal_bL9_N_sf"/>
</dbReference>
<dbReference type="NCBIfam" id="TIGR00158">
    <property type="entry name" value="L9"/>
    <property type="match status" value="1"/>
</dbReference>
<dbReference type="PANTHER" id="PTHR21368">
    <property type="entry name" value="50S RIBOSOMAL PROTEIN L9"/>
    <property type="match status" value="1"/>
</dbReference>
<dbReference type="Pfam" id="PF03948">
    <property type="entry name" value="Ribosomal_L9_C"/>
    <property type="match status" value="1"/>
</dbReference>
<dbReference type="Pfam" id="PF01281">
    <property type="entry name" value="Ribosomal_L9_N"/>
    <property type="match status" value="1"/>
</dbReference>
<dbReference type="SUPFAM" id="SSF55658">
    <property type="entry name" value="L9 N-domain-like"/>
    <property type="match status" value="1"/>
</dbReference>
<dbReference type="SUPFAM" id="SSF55653">
    <property type="entry name" value="Ribosomal protein L9 C-domain"/>
    <property type="match status" value="1"/>
</dbReference>
<dbReference type="PROSITE" id="PS00651">
    <property type="entry name" value="RIBOSOMAL_L9"/>
    <property type="match status" value="1"/>
</dbReference>
<sequence>MDVILLERVEKLGQIGDVVSVKAGFARNYLLPRKKALRANEANKKVFEANRAQIEADNANRRGNAETEAKALDDKSVTLIRQASNTGQLYGSVSARDIVEALAEDGIKVAKSGVVLGRPIKTIGLHEVKISLHAEVSRTVKVNVARSPEEAELQSQGVDVMAQLFERDEAGFTEDYDPNAEPGEIPTELQDEAPAAEATDEA</sequence>
<organism>
    <name type="scientific">Rhizorhabdus wittichii (strain DSM 6014 / CCUG 31198 / JCM 15750 / NBRC 105917 / EY 4224 / RW1)</name>
    <name type="common">Sphingomonas wittichii</name>
    <dbReference type="NCBI Taxonomy" id="392499"/>
    <lineage>
        <taxon>Bacteria</taxon>
        <taxon>Pseudomonadati</taxon>
        <taxon>Pseudomonadota</taxon>
        <taxon>Alphaproteobacteria</taxon>
        <taxon>Sphingomonadales</taxon>
        <taxon>Sphingomonadaceae</taxon>
        <taxon>Rhizorhabdus</taxon>
    </lineage>
</organism>
<feature type="chain" id="PRO_1000014868" description="Large ribosomal subunit protein bL9">
    <location>
        <begin position="1"/>
        <end position="202"/>
    </location>
</feature>
<feature type="region of interest" description="Disordered" evidence="2">
    <location>
        <begin position="168"/>
        <end position="202"/>
    </location>
</feature>
<feature type="compositionally biased region" description="Low complexity" evidence="2">
    <location>
        <begin position="192"/>
        <end position="202"/>
    </location>
</feature>